<organism>
    <name type="scientific">Mus musculus</name>
    <name type="common">Mouse</name>
    <dbReference type="NCBI Taxonomy" id="10090"/>
    <lineage>
        <taxon>Eukaryota</taxon>
        <taxon>Metazoa</taxon>
        <taxon>Chordata</taxon>
        <taxon>Craniata</taxon>
        <taxon>Vertebrata</taxon>
        <taxon>Euteleostomi</taxon>
        <taxon>Mammalia</taxon>
        <taxon>Eutheria</taxon>
        <taxon>Euarchontoglires</taxon>
        <taxon>Glires</taxon>
        <taxon>Rodentia</taxon>
        <taxon>Myomorpha</taxon>
        <taxon>Muroidea</taxon>
        <taxon>Muridae</taxon>
        <taxon>Murinae</taxon>
        <taxon>Mus</taxon>
        <taxon>Mus</taxon>
    </lineage>
</organism>
<proteinExistence type="evidence at transcript level"/>
<dbReference type="EMBL" id="AK076579">
    <property type="protein sequence ID" value="BAC36402.1"/>
    <property type="molecule type" value="mRNA"/>
</dbReference>
<dbReference type="CCDS" id="CCDS37653.1"/>
<dbReference type="RefSeq" id="NP_775625.1">
    <property type="nucleotide sequence ID" value="NM_173449.3"/>
</dbReference>
<dbReference type="SMR" id="Q8BVT6"/>
<dbReference type="FunCoup" id="Q8BVT6">
    <property type="interactions" value="2"/>
</dbReference>
<dbReference type="STRING" id="10090.ENSMUSP00000056682"/>
<dbReference type="iPTMnet" id="Q8BVT6"/>
<dbReference type="PhosphoSitePlus" id="Q8BVT6"/>
<dbReference type="SwissPalm" id="Q8BVT6"/>
<dbReference type="PaxDb" id="10090-ENSMUSP00000056682"/>
<dbReference type="ProteomicsDB" id="291643"/>
<dbReference type="Antibodypedia" id="49756">
    <property type="antibodies" value="7 antibodies from 6 providers"/>
</dbReference>
<dbReference type="DNASU" id="110332"/>
<dbReference type="Ensembl" id="ENSMUST00000056198.4">
    <property type="protein sequence ID" value="ENSMUSP00000056682.4"/>
    <property type="gene ID" value="ENSMUSG00000044957.4"/>
</dbReference>
<dbReference type="GeneID" id="110332"/>
<dbReference type="KEGG" id="mmu:110332"/>
<dbReference type="UCSC" id="uc008czo.1">
    <property type="organism name" value="mouse"/>
</dbReference>
<dbReference type="AGR" id="MGI:3612067"/>
<dbReference type="CTD" id="151649"/>
<dbReference type="MGI" id="MGI:3612067">
    <property type="gene designation" value="Pp2d1"/>
</dbReference>
<dbReference type="VEuPathDB" id="HostDB:ENSMUSG00000044957"/>
<dbReference type="eggNOG" id="KOG0698">
    <property type="taxonomic scope" value="Eukaryota"/>
</dbReference>
<dbReference type="GeneTree" id="ENSGT00390000017863"/>
<dbReference type="HOGENOM" id="CLU_023323_0_0_1"/>
<dbReference type="InParanoid" id="Q8BVT6"/>
<dbReference type="OMA" id="NFYEGAA"/>
<dbReference type="OrthoDB" id="343114at2759"/>
<dbReference type="PhylomeDB" id="Q8BVT6"/>
<dbReference type="TreeFam" id="TF332888"/>
<dbReference type="BioGRID-ORCS" id="110332">
    <property type="hits" value="2 hits in 77 CRISPR screens"/>
</dbReference>
<dbReference type="ChiTaRS" id="Pp2d1">
    <property type="organism name" value="mouse"/>
</dbReference>
<dbReference type="PRO" id="PR:Q8BVT6"/>
<dbReference type="Proteomes" id="UP000000589">
    <property type="component" value="Chromosome 17"/>
</dbReference>
<dbReference type="RNAct" id="Q8BVT6">
    <property type="molecule type" value="protein"/>
</dbReference>
<dbReference type="Bgee" id="ENSMUSG00000044957">
    <property type="expression patterns" value="Expressed in spermatid and 43 other cell types or tissues"/>
</dbReference>
<dbReference type="GO" id="GO:0004722">
    <property type="term" value="F:protein serine/threonine phosphatase activity"/>
    <property type="evidence" value="ECO:0007669"/>
    <property type="project" value="InterPro"/>
</dbReference>
<dbReference type="CDD" id="cd00143">
    <property type="entry name" value="PP2Cc"/>
    <property type="match status" value="1"/>
</dbReference>
<dbReference type="Gene3D" id="3.60.40.10">
    <property type="entry name" value="PPM-type phosphatase domain"/>
    <property type="match status" value="1"/>
</dbReference>
<dbReference type="InterPro" id="IPR015655">
    <property type="entry name" value="PP2C"/>
</dbReference>
<dbReference type="InterPro" id="IPR036457">
    <property type="entry name" value="PPM-type-like_dom_sf"/>
</dbReference>
<dbReference type="InterPro" id="IPR001932">
    <property type="entry name" value="PPM-type_phosphatase-like_dom"/>
</dbReference>
<dbReference type="PANTHER" id="PTHR13832">
    <property type="entry name" value="PROTEIN PHOSPHATASE 2C"/>
    <property type="match status" value="1"/>
</dbReference>
<dbReference type="PANTHER" id="PTHR13832:SF837">
    <property type="entry name" value="PROTEIN PHOSPHATASE 2C-LIKE DOMAIN-CONTAINING PROTEIN 1"/>
    <property type="match status" value="1"/>
</dbReference>
<dbReference type="Pfam" id="PF00481">
    <property type="entry name" value="PP2C"/>
    <property type="match status" value="1"/>
</dbReference>
<dbReference type="SMART" id="SM00332">
    <property type="entry name" value="PP2Cc"/>
    <property type="match status" value="1"/>
</dbReference>
<dbReference type="SUPFAM" id="SSF81606">
    <property type="entry name" value="PP2C-like"/>
    <property type="match status" value="1"/>
</dbReference>
<dbReference type="PROSITE" id="PS51746">
    <property type="entry name" value="PPM_2"/>
    <property type="match status" value="1"/>
</dbReference>
<sequence length="620" mass="70630">MNWELYSSPLRVFWRSKVWDEKTSTFTSDENLKIGKMVGKRRRPRPKRSIDLEDSTEQLISGDMVTFPCSVCYRELNKARNFLHKKHHNALSMLGFQWMGGRQPKPKLVSLHRECIISNLLRSSTYNEKVLHNVNYAFEFLWKKQVPSYFKLCDKVGETSTYSPNSNHLMIKGIAICSNNNSAWKAEPNCKFTVVNDFGDKANVCFFGLFDSHYGYAAADLASKEFQVLLLHQLSIQDPSYQMTAEQKQLINSFDTVFREEYRAREEAFSSTYKTFRTSRREYEDTHKAFAKAFWRMDRLLRLGRNETSRVRWSGCSALTCILEGGIKNPHANKDWEKTYQQGSTSLPFQKTPQIISGVLHLANAGNVQAVLCRNGKGFCLTKEHSTRNTKERRRVLYSEAVISSDDPYGLLDGHIKTTRGLGFHGNLRLKKSIIPAPQTISVPIDDLCQFLILATNGLWQVLDKKEVTALVITLFHAYKETHVPRPKSKPWPPIGLLSPPDSNIRVLFQYQPENEDIMSTADGTKGLSDSIYAEAYTHQGTFSPKVTPYDPCSTKENSSLPTIDSKQENEKELCIKNFYKGAAEYIGCELVSAAIEGGSRDSITVMVMFLNGSEYHRLT</sequence>
<protein>
    <recommendedName>
        <fullName>Protein phosphatase 2C-like domain-containing protein 1</fullName>
    </recommendedName>
</protein>
<accession>Q8BVT6</accession>
<comment type="similarity">
    <text evidence="2">Belongs to the PP2C family.</text>
</comment>
<comment type="caution">
    <text evidence="2">Although it belongs to the protein phosphatase 2C family, it lacks some of the conserved residues that bind manganese, suggesting it has no phosphatase activity.</text>
</comment>
<feature type="chain" id="PRO_0000320673" description="Protein phosphatase 2C-like domain-containing protein 1">
    <location>
        <begin position="1"/>
        <end position="620"/>
    </location>
</feature>
<feature type="domain" description="PPM-type phosphatase" evidence="1">
    <location>
        <begin position="173"/>
        <end position="611"/>
    </location>
</feature>
<name>PP2D1_MOUSE</name>
<evidence type="ECO:0000255" key="1">
    <source>
        <dbReference type="PROSITE-ProRule" id="PRU01082"/>
    </source>
</evidence>
<evidence type="ECO:0000305" key="2"/>
<gene>
    <name type="primary">Pp2d1</name>
</gene>
<reference key="1">
    <citation type="journal article" date="2005" name="Science">
        <title>The transcriptional landscape of the mammalian genome.</title>
        <authorList>
            <person name="Carninci P."/>
            <person name="Kasukawa T."/>
            <person name="Katayama S."/>
            <person name="Gough J."/>
            <person name="Frith M.C."/>
            <person name="Maeda N."/>
            <person name="Oyama R."/>
            <person name="Ravasi T."/>
            <person name="Lenhard B."/>
            <person name="Wells C."/>
            <person name="Kodzius R."/>
            <person name="Shimokawa K."/>
            <person name="Bajic V.B."/>
            <person name="Brenner S.E."/>
            <person name="Batalov S."/>
            <person name="Forrest A.R."/>
            <person name="Zavolan M."/>
            <person name="Davis M.J."/>
            <person name="Wilming L.G."/>
            <person name="Aidinis V."/>
            <person name="Allen J.E."/>
            <person name="Ambesi-Impiombato A."/>
            <person name="Apweiler R."/>
            <person name="Aturaliya R.N."/>
            <person name="Bailey T.L."/>
            <person name="Bansal M."/>
            <person name="Baxter L."/>
            <person name="Beisel K.W."/>
            <person name="Bersano T."/>
            <person name="Bono H."/>
            <person name="Chalk A.M."/>
            <person name="Chiu K.P."/>
            <person name="Choudhary V."/>
            <person name="Christoffels A."/>
            <person name="Clutterbuck D.R."/>
            <person name="Crowe M.L."/>
            <person name="Dalla E."/>
            <person name="Dalrymple B.P."/>
            <person name="de Bono B."/>
            <person name="Della Gatta G."/>
            <person name="di Bernardo D."/>
            <person name="Down T."/>
            <person name="Engstrom P."/>
            <person name="Fagiolini M."/>
            <person name="Faulkner G."/>
            <person name="Fletcher C.F."/>
            <person name="Fukushima T."/>
            <person name="Furuno M."/>
            <person name="Futaki S."/>
            <person name="Gariboldi M."/>
            <person name="Georgii-Hemming P."/>
            <person name="Gingeras T.R."/>
            <person name="Gojobori T."/>
            <person name="Green R.E."/>
            <person name="Gustincich S."/>
            <person name="Harbers M."/>
            <person name="Hayashi Y."/>
            <person name="Hensch T.K."/>
            <person name="Hirokawa N."/>
            <person name="Hill D."/>
            <person name="Huminiecki L."/>
            <person name="Iacono M."/>
            <person name="Ikeo K."/>
            <person name="Iwama A."/>
            <person name="Ishikawa T."/>
            <person name="Jakt M."/>
            <person name="Kanapin A."/>
            <person name="Katoh M."/>
            <person name="Kawasawa Y."/>
            <person name="Kelso J."/>
            <person name="Kitamura H."/>
            <person name="Kitano H."/>
            <person name="Kollias G."/>
            <person name="Krishnan S.P."/>
            <person name="Kruger A."/>
            <person name="Kummerfeld S.K."/>
            <person name="Kurochkin I.V."/>
            <person name="Lareau L.F."/>
            <person name="Lazarevic D."/>
            <person name="Lipovich L."/>
            <person name="Liu J."/>
            <person name="Liuni S."/>
            <person name="McWilliam S."/>
            <person name="Madan Babu M."/>
            <person name="Madera M."/>
            <person name="Marchionni L."/>
            <person name="Matsuda H."/>
            <person name="Matsuzawa S."/>
            <person name="Miki H."/>
            <person name="Mignone F."/>
            <person name="Miyake S."/>
            <person name="Morris K."/>
            <person name="Mottagui-Tabar S."/>
            <person name="Mulder N."/>
            <person name="Nakano N."/>
            <person name="Nakauchi H."/>
            <person name="Ng P."/>
            <person name="Nilsson R."/>
            <person name="Nishiguchi S."/>
            <person name="Nishikawa S."/>
            <person name="Nori F."/>
            <person name="Ohara O."/>
            <person name="Okazaki Y."/>
            <person name="Orlando V."/>
            <person name="Pang K.C."/>
            <person name="Pavan W.J."/>
            <person name="Pavesi G."/>
            <person name="Pesole G."/>
            <person name="Petrovsky N."/>
            <person name="Piazza S."/>
            <person name="Reed J."/>
            <person name="Reid J.F."/>
            <person name="Ring B.Z."/>
            <person name="Ringwald M."/>
            <person name="Rost B."/>
            <person name="Ruan Y."/>
            <person name="Salzberg S.L."/>
            <person name="Sandelin A."/>
            <person name="Schneider C."/>
            <person name="Schoenbach C."/>
            <person name="Sekiguchi K."/>
            <person name="Semple C.A."/>
            <person name="Seno S."/>
            <person name="Sessa L."/>
            <person name="Sheng Y."/>
            <person name="Shibata Y."/>
            <person name="Shimada H."/>
            <person name="Shimada K."/>
            <person name="Silva D."/>
            <person name="Sinclair B."/>
            <person name="Sperling S."/>
            <person name="Stupka E."/>
            <person name="Sugiura K."/>
            <person name="Sultana R."/>
            <person name="Takenaka Y."/>
            <person name="Taki K."/>
            <person name="Tammoja K."/>
            <person name="Tan S.L."/>
            <person name="Tang S."/>
            <person name="Taylor M.S."/>
            <person name="Tegner J."/>
            <person name="Teichmann S.A."/>
            <person name="Ueda H.R."/>
            <person name="van Nimwegen E."/>
            <person name="Verardo R."/>
            <person name="Wei C.L."/>
            <person name="Yagi K."/>
            <person name="Yamanishi H."/>
            <person name="Zabarovsky E."/>
            <person name="Zhu S."/>
            <person name="Zimmer A."/>
            <person name="Hide W."/>
            <person name="Bult C."/>
            <person name="Grimmond S.M."/>
            <person name="Teasdale R.D."/>
            <person name="Liu E.T."/>
            <person name="Brusic V."/>
            <person name="Quackenbush J."/>
            <person name="Wahlestedt C."/>
            <person name="Mattick J.S."/>
            <person name="Hume D.A."/>
            <person name="Kai C."/>
            <person name="Sasaki D."/>
            <person name="Tomaru Y."/>
            <person name="Fukuda S."/>
            <person name="Kanamori-Katayama M."/>
            <person name="Suzuki M."/>
            <person name="Aoki J."/>
            <person name="Arakawa T."/>
            <person name="Iida J."/>
            <person name="Imamura K."/>
            <person name="Itoh M."/>
            <person name="Kato T."/>
            <person name="Kawaji H."/>
            <person name="Kawagashira N."/>
            <person name="Kawashima T."/>
            <person name="Kojima M."/>
            <person name="Kondo S."/>
            <person name="Konno H."/>
            <person name="Nakano K."/>
            <person name="Ninomiya N."/>
            <person name="Nishio T."/>
            <person name="Okada M."/>
            <person name="Plessy C."/>
            <person name="Shibata K."/>
            <person name="Shiraki T."/>
            <person name="Suzuki S."/>
            <person name="Tagami M."/>
            <person name="Waki K."/>
            <person name="Watahiki A."/>
            <person name="Okamura-Oho Y."/>
            <person name="Suzuki H."/>
            <person name="Kawai J."/>
            <person name="Hayashizaki Y."/>
        </authorList>
    </citation>
    <scope>NUCLEOTIDE SEQUENCE [LARGE SCALE MRNA]</scope>
    <source>
        <strain>C57BL/6J</strain>
        <tissue>Testis</tissue>
    </source>
</reference>
<keyword id="KW-1185">Reference proteome</keyword>